<proteinExistence type="inferred from homology"/>
<name>LIGB_ECOLC</name>
<protein>
    <recommendedName>
        <fullName evidence="1">DNA ligase B</fullName>
        <ecNumber evidence="1">6.5.1.2</ecNumber>
    </recommendedName>
    <alternativeName>
        <fullName evidence="1">Polydeoxyribonucleotide synthase [NAD(+)] B</fullName>
    </alternativeName>
</protein>
<feature type="chain" id="PRO_1000087956" description="DNA ligase B">
    <location>
        <begin position="1"/>
        <end position="560"/>
    </location>
</feature>
<feature type="active site" description="N6-AMP-lysine intermediate" evidence="1">
    <location>
        <position position="124"/>
    </location>
</feature>
<accession>B1IYV3</accession>
<gene>
    <name evidence="1" type="primary">ligB</name>
    <name type="ordered locus">EcolC_0064</name>
</gene>
<evidence type="ECO:0000255" key="1">
    <source>
        <dbReference type="HAMAP-Rule" id="MF_01587"/>
    </source>
</evidence>
<organism>
    <name type="scientific">Escherichia coli (strain ATCC 8739 / DSM 1576 / NBRC 3972 / NCIMB 8545 / WDCM 00012 / Crooks)</name>
    <dbReference type="NCBI Taxonomy" id="481805"/>
    <lineage>
        <taxon>Bacteria</taxon>
        <taxon>Pseudomonadati</taxon>
        <taxon>Pseudomonadota</taxon>
        <taxon>Gammaproteobacteria</taxon>
        <taxon>Enterobacterales</taxon>
        <taxon>Enterobacteriaceae</taxon>
        <taxon>Escherichia</taxon>
    </lineage>
</organism>
<dbReference type="EC" id="6.5.1.2" evidence="1"/>
<dbReference type="EMBL" id="CP000946">
    <property type="protein sequence ID" value="ACA75750.1"/>
    <property type="molecule type" value="Genomic_DNA"/>
</dbReference>
<dbReference type="RefSeq" id="WP_000870047.1">
    <property type="nucleotide sequence ID" value="NZ_MTFT01000034.1"/>
</dbReference>
<dbReference type="SMR" id="B1IYV3"/>
<dbReference type="KEGG" id="ecl:EcolC_0064"/>
<dbReference type="HOGENOM" id="CLU_489786_0_0_6"/>
<dbReference type="GO" id="GO:0003911">
    <property type="term" value="F:DNA ligase (NAD+) activity"/>
    <property type="evidence" value="ECO:0007669"/>
    <property type="project" value="UniProtKB-UniRule"/>
</dbReference>
<dbReference type="GO" id="GO:0006281">
    <property type="term" value="P:DNA repair"/>
    <property type="evidence" value="ECO:0007669"/>
    <property type="project" value="UniProtKB-KW"/>
</dbReference>
<dbReference type="GO" id="GO:0006260">
    <property type="term" value="P:DNA replication"/>
    <property type="evidence" value="ECO:0007669"/>
    <property type="project" value="UniProtKB-KW"/>
</dbReference>
<dbReference type="FunFam" id="1.10.287.610:FF:000003">
    <property type="entry name" value="DNA ligase B"/>
    <property type="match status" value="1"/>
</dbReference>
<dbReference type="FunFam" id="2.40.50.140:FF:000139">
    <property type="entry name" value="DNA ligase B"/>
    <property type="match status" value="1"/>
</dbReference>
<dbReference type="FunFam" id="3.30.470.30:FF:000007">
    <property type="entry name" value="DNA ligase B"/>
    <property type="match status" value="1"/>
</dbReference>
<dbReference type="Gene3D" id="3.30.470.30">
    <property type="entry name" value="DNA ligase/mRNA capping enzyme"/>
    <property type="match status" value="1"/>
</dbReference>
<dbReference type="Gene3D" id="1.10.287.610">
    <property type="entry name" value="Helix hairpin bin"/>
    <property type="match status" value="1"/>
</dbReference>
<dbReference type="Gene3D" id="2.40.50.140">
    <property type="entry name" value="Nucleic acid-binding proteins"/>
    <property type="match status" value="1"/>
</dbReference>
<dbReference type="HAMAP" id="MF_01587">
    <property type="entry name" value="DNA_ligase_B"/>
    <property type="match status" value="1"/>
</dbReference>
<dbReference type="InterPro" id="IPR018239">
    <property type="entry name" value="DNA_ligase_AS"/>
</dbReference>
<dbReference type="InterPro" id="IPR020923">
    <property type="entry name" value="DNA_ligase_B"/>
</dbReference>
<dbReference type="InterPro" id="IPR033136">
    <property type="entry name" value="DNA_ligase_CS"/>
</dbReference>
<dbReference type="InterPro" id="IPR013839">
    <property type="entry name" value="DNAligase_adenylation"/>
</dbReference>
<dbReference type="InterPro" id="IPR013840">
    <property type="entry name" value="DNAligase_N"/>
</dbReference>
<dbReference type="InterPro" id="IPR012340">
    <property type="entry name" value="NA-bd_OB-fold"/>
</dbReference>
<dbReference type="InterPro" id="IPR050326">
    <property type="entry name" value="NAD_dep_DNA_ligaseB"/>
</dbReference>
<dbReference type="InterPro" id="IPR004150">
    <property type="entry name" value="NAD_DNA_ligase_OB"/>
</dbReference>
<dbReference type="InterPro" id="IPR010994">
    <property type="entry name" value="RuvA_2-like"/>
</dbReference>
<dbReference type="NCBIfam" id="NF005987">
    <property type="entry name" value="PRK08097.1"/>
    <property type="match status" value="1"/>
</dbReference>
<dbReference type="PANTHER" id="PTHR47810">
    <property type="entry name" value="DNA LIGASE"/>
    <property type="match status" value="1"/>
</dbReference>
<dbReference type="PANTHER" id="PTHR47810:SF1">
    <property type="entry name" value="DNA LIGASE B"/>
    <property type="match status" value="1"/>
</dbReference>
<dbReference type="Pfam" id="PF01653">
    <property type="entry name" value="DNA_ligase_aden"/>
    <property type="match status" value="1"/>
</dbReference>
<dbReference type="Pfam" id="PF03120">
    <property type="entry name" value="DNA_ligase_OB"/>
    <property type="match status" value="1"/>
</dbReference>
<dbReference type="SMART" id="SM00532">
    <property type="entry name" value="LIGANc"/>
    <property type="match status" value="1"/>
</dbReference>
<dbReference type="SUPFAM" id="SSF56091">
    <property type="entry name" value="DNA ligase/mRNA capping enzyme, catalytic domain"/>
    <property type="match status" value="1"/>
</dbReference>
<dbReference type="SUPFAM" id="SSF50249">
    <property type="entry name" value="Nucleic acid-binding proteins"/>
    <property type="match status" value="1"/>
</dbReference>
<dbReference type="SUPFAM" id="SSF47781">
    <property type="entry name" value="RuvA domain 2-like"/>
    <property type="match status" value="1"/>
</dbReference>
<dbReference type="PROSITE" id="PS01055">
    <property type="entry name" value="DNA_LIGASE_N1"/>
    <property type="match status" value="1"/>
</dbReference>
<dbReference type="PROSITE" id="PS01056">
    <property type="entry name" value="DNA_LIGASE_N2"/>
    <property type="match status" value="1"/>
</dbReference>
<keyword id="KW-0227">DNA damage</keyword>
<keyword id="KW-0234">DNA repair</keyword>
<keyword id="KW-0235">DNA replication</keyword>
<keyword id="KW-0436">Ligase</keyword>
<keyword id="KW-0520">NAD</keyword>
<sequence length="560" mass="63209">MKVWMAILISILCWQSSVWAVCPAWSPARAQEEISRLQQQIKQWDDDYWKEGKSEVEDGVYDQLSARLTQWQRCFGSEPRDVMMPPLNGAVMHPVAHTGVRKMVDKNALSLWMRERSDLWVQPKVDGVAVTLVYRDGKLNKAISRGNGLKGEDWTQKVSLISAVPQTVSGPLANSTLQGEIFLQREGHIQQQMGGINARAKVAGLMMRQDDSDTLNSLGVFVWAWPDGPQLMSDRLKELATAGFTLTQTYTRAVKNADEVARVRNEWWKAELPFVTDGVVVRAAKEPESRHWLPGQAEWLVAWKYQPVAQVAEVKAIQFAVGKSGKISVVASLAPVMLDDKKVQRVNIGSVRRWQEWDIAPGDQILVSLAGQGIPRIDDVVWRGAERTKPTPPENRFNSLTCYFASDVCQEQFISRLVWLGAKQVLGLDGIGEAGWRALHQTHRFEHIFSWLLLTPEQLQNTPGIAKSKSAQLWHQFNLARKQPFTRWVMAMGIPLTRAALNASDERSWSQLLFSTEQFWQQLPGTGSGRARQVIEWKENAQIKKLGSWLAAQQITGFEP</sequence>
<comment type="function">
    <text evidence="1">Catalyzes the formation of phosphodiester linkages between 5'-phosphoryl and 3'-hydroxyl groups in double-stranded DNA using NAD as a coenzyme and as the energy source for the reaction.</text>
</comment>
<comment type="catalytic activity">
    <reaction evidence="1">
        <text>NAD(+) + (deoxyribonucleotide)n-3'-hydroxyl + 5'-phospho-(deoxyribonucleotide)m = (deoxyribonucleotide)n+m + AMP + beta-nicotinamide D-nucleotide.</text>
        <dbReference type="EC" id="6.5.1.2"/>
    </reaction>
</comment>
<comment type="similarity">
    <text evidence="1">Belongs to the NAD-dependent DNA ligase family. LigB subfamily.</text>
</comment>
<reference key="1">
    <citation type="submission" date="2008-02" db="EMBL/GenBank/DDBJ databases">
        <title>Complete sequence of Escherichia coli C str. ATCC 8739.</title>
        <authorList>
            <person name="Copeland A."/>
            <person name="Lucas S."/>
            <person name="Lapidus A."/>
            <person name="Glavina del Rio T."/>
            <person name="Dalin E."/>
            <person name="Tice H."/>
            <person name="Bruce D."/>
            <person name="Goodwin L."/>
            <person name="Pitluck S."/>
            <person name="Kiss H."/>
            <person name="Brettin T."/>
            <person name="Detter J.C."/>
            <person name="Han C."/>
            <person name="Kuske C.R."/>
            <person name="Schmutz J."/>
            <person name="Larimer F."/>
            <person name="Land M."/>
            <person name="Hauser L."/>
            <person name="Kyrpides N."/>
            <person name="Mikhailova N."/>
            <person name="Ingram L."/>
            <person name="Richardson P."/>
        </authorList>
    </citation>
    <scope>NUCLEOTIDE SEQUENCE [LARGE SCALE GENOMIC DNA]</scope>
    <source>
        <strain>ATCC 8739 / DSM 1576 / NBRC 3972 / NCIMB 8545 / WDCM 00012 / Crooks</strain>
    </source>
</reference>